<reference key="1">
    <citation type="journal article" date="1999" name="Nature">
        <title>Aquatic sex pheromone from a male tree frog.</title>
        <authorList>
            <person name="Wabnitz P.A."/>
            <person name="Bowie J.H."/>
            <person name="Tyler M.J."/>
            <person name="Wallace J.C."/>
            <person name="Smith B.P."/>
        </authorList>
    </citation>
    <scope>PROTEIN SEQUENCE</scope>
    <scope>FUNCTION</scope>
    <scope>SUBCELLULAR LOCATION</scope>
    <source>
        <tissue>Parotoid gland</tissue>
        <tissue>Rostral gland</tissue>
    </source>
</reference>
<reference key="2">
    <citation type="journal article" date="2000" name="Eur. J. Biochem.">
        <title>Differences in the skin peptides of the male and female Australian tree frog Litoria splendida. The discovery of the aquatic male sex pheromone splendipherin, together with Phe8 caerulein and a new antibiotic peptide caerin 1.10.</title>
        <authorList>
            <person name="Wabnitz P.A."/>
            <person name="Bowie J.H."/>
            <person name="Tyler M.J."/>
            <person name="Wallace J.C."/>
            <person name="Smith B.P."/>
        </authorList>
    </citation>
    <scope>PROTEIN SEQUENCE</scope>
    <scope>FUNCTION</scope>
    <scope>SUBCELLULAR LOCATION</scope>
    <source>
        <tissue>Skin secretion</tissue>
    </source>
</reference>
<reference key="3">
    <citation type="journal article" date="2002" name="Eur. J. Biochem.">
        <title>Amphibian peptides that inhibit neuronal nitric oxide synthase. Isolation of lesuerin from the skin secretion of the Australian stony creek frog Litoria lesueuri.</title>
        <authorList>
            <person name="Doyle J."/>
            <person name="Llewellyn L.E."/>
            <person name="Brinkworth C.S."/>
            <person name="Bowie J.H."/>
            <person name="Wegener K.L."/>
            <person name="Rozek T."/>
            <person name="Wabnitz P.A."/>
            <person name="Wallace J.C."/>
            <person name="Tyler M.J."/>
        </authorList>
    </citation>
    <scope>FUNCTION</scope>
</reference>
<organism>
    <name type="scientific">Ranoidea splendida</name>
    <name type="common">Magnificent tree frog</name>
    <name type="synonym">Litoria splendida</name>
    <dbReference type="NCBI Taxonomy" id="30345"/>
    <lineage>
        <taxon>Eukaryota</taxon>
        <taxon>Metazoa</taxon>
        <taxon>Chordata</taxon>
        <taxon>Craniata</taxon>
        <taxon>Vertebrata</taxon>
        <taxon>Euteleostomi</taxon>
        <taxon>Amphibia</taxon>
        <taxon>Batrachia</taxon>
        <taxon>Anura</taxon>
        <taxon>Neobatrachia</taxon>
        <taxon>Hyloidea</taxon>
        <taxon>Hylidae</taxon>
        <taxon>Pelodryadinae</taxon>
        <taxon>Ranoidea</taxon>
    </lineage>
</organism>
<name>CR23_RANSP</name>
<comment type="function">
    <text evidence="1 2 3 4">Acts as a male sex pheromone that attracts females (PubMed:10519546, PubMed:10601876). Has no antimicrobial activity (PubMed:10519546, PubMed:10601876). Strongly inhibits the formation of NO by neuronal nitric oxide synthase (nNOS) at micromolar concentrations (PubMed:11784303). Acts by a non-competitive mechanism, probably by binding to calcium/calmodulin and as a consequence blocking calmodulin attachment to nNOS (By similarity).</text>
</comment>
<comment type="subcellular location">
    <subcellularLocation>
        <location evidence="2 3">Secreted</location>
    </subcellularLocation>
</comment>
<comment type="tissue specificity">
    <text evidence="7 8">Expressed by the skin parotoid and/or rostral glands.</text>
</comment>
<comment type="similarity">
    <text evidence="6">Belongs to the frog skin active peptide (FSAP) family. Caerin subfamily.</text>
</comment>
<sequence>GLVSSIGKALGGLLADVVKSKGQPA</sequence>
<accession>P69033</accession>
<accession>P56235</accession>
<accession>P82117</accession>
<evidence type="ECO:0000250" key="1">
    <source>
        <dbReference type="UniProtKB" id="P56249"/>
    </source>
</evidence>
<evidence type="ECO:0000269" key="2">
    <source>
    </source>
</evidence>
<evidence type="ECO:0000269" key="3">
    <source>
    </source>
</evidence>
<evidence type="ECO:0000269" key="4">
    <source>
    </source>
</evidence>
<evidence type="ECO:0000303" key="5">
    <source>
    </source>
</evidence>
<evidence type="ECO:0000305" key="6"/>
<evidence type="ECO:0000305" key="7">
    <source>
    </source>
</evidence>
<evidence type="ECO:0000305" key="8">
    <source>
    </source>
</evidence>
<protein>
    <recommendedName>
        <fullName evidence="5">Splendipherin</fullName>
    </recommendedName>
</protein>
<dbReference type="GO" id="GO:0005576">
    <property type="term" value="C:extracellular region"/>
    <property type="evidence" value="ECO:0007669"/>
    <property type="project" value="UniProtKB-SubCell"/>
</dbReference>
<dbReference type="GO" id="GO:0005186">
    <property type="term" value="F:pheromone activity"/>
    <property type="evidence" value="ECO:0007669"/>
    <property type="project" value="UniProtKB-KW"/>
</dbReference>
<dbReference type="GO" id="GO:0006952">
    <property type="term" value="P:defense response"/>
    <property type="evidence" value="ECO:0007669"/>
    <property type="project" value="UniProtKB-KW"/>
</dbReference>
<dbReference type="InterPro" id="IPR032021">
    <property type="entry name" value="Frog_Litoria"/>
</dbReference>
<dbReference type="Pfam" id="PF16049">
    <property type="entry name" value="Antimicrobial24"/>
    <property type="match status" value="1"/>
</dbReference>
<feature type="peptide" id="PRO_0000043744" description="Splendipherin" evidence="2 3">
    <location>
        <begin position="1"/>
        <end position="25"/>
    </location>
</feature>
<keyword id="KW-0878">Amphibian defense peptide</keyword>
<keyword id="KW-0903">Direct protein sequencing</keyword>
<keyword id="KW-0588">Pheromone</keyword>
<keyword id="KW-0964">Secreted</keyword>
<proteinExistence type="evidence at protein level"/>